<keyword id="KW-0963">Cytoplasm</keyword>
<keyword id="KW-0931">ER-Golgi transport</keyword>
<keyword id="KW-0333">Golgi apparatus</keyword>
<keyword id="KW-0342">GTP-binding</keyword>
<keyword id="KW-0449">Lipoprotein</keyword>
<keyword id="KW-0519">Myristate</keyword>
<keyword id="KW-0547">Nucleotide-binding</keyword>
<keyword id="KW-0653">Protein transport</keyword>
<keyword id="KW-1185">Reference proteome</keyword>
<keyword id="KW-0813">Transport</keyword>
<reference key="1">
    <citation type="journal article" date="1996" name="J. Biochem.">
        <title>Structure and intracellular localization of mouse ADP-ribosylation factors type 1 to type 6 (ARF1-ARF6).</title>
        <authorList>
            <person name="Hosaka M."/>
            <person name="Toda K."/>
            <person name="Takatsu H."/>
            <person name="Torii S."/>
            <person name="Murakami K."/>
            <person name="Nakayama K."/>
        </authorList>
    </citation>
    <scope>NUCLEOTIDE SEQUENCE [MRNA]</scope>
    <source>
        <strain>ICR</strain>
        <tissue>Brain</tissue>
    </source>
</reference>
<reference key="2">
    <citation type="journal article" date="2004" name="Genome Res.">
        <title>The status, quality, and expansion of the NIH full-length cDNA project: the Mammalian Gene Collection (MGC).</title>
        <authorList>
            <consortium name="The MGC Project Team"/>
        </authorList>
    </citation>
    <scope>NUCLEOTIDE SEQUENCE [LARGE SCALE MRNA]</scope>
    <source>
        <strain>FVB/N</strain>
        <tissue>Mammary tumor</tissue>
    </source>
</reference>
<comment type="function">
    <text>GTP-binding protein that functions as an allosteric activator of the cholera toxin catalytic subunit, an ADP-ribosyltransferase. Involved in protein trafficking; may modulate vesicle budding and uncoating within the Golgi apparatus.</text>
</comment>
<comment type="subunit">
    <text evidence="1">Interacts with PRKCABP. Interacts with PI4KB and NCS1/FREQ at the Golgi complex.</text>
</comment>
<comment type="subcellular location">
    <subcellularLocation>
        <location evidence="1">Golgi apparatus</location>
    </subcellularLocation>
    <subcellularLocation>
        <location evidence="1">Cytoplasm</location>
        <location evidence="1">Perinuclear region</location>
    </subcellularLocation>
</comment>
<comment type="similarity">
    <text evidence="3">Belongs to the small GTPase superfamily. Arf family.</text>
</comment>
<organism>
    <name type="scientific">Mus musculus</name>
    <name type="common">Mouse</name>
    <dbReference type="NCBI Taxonomy" id="10090"/>
    <lineage>
        <taxon>Eukaryota</taxon>
        <taxon>Metazoa</taxon>
        <taxon>Chordata</taxon>
        <taxon>Craniata</taxon>
        <taxon>Vertebrata</taxon>
        <taxon>Euteleostomi</taxon>
        <taxon>Mammalia</taxon>
        <taxon>Eutheria</taxon>
        <taxon>Euarchontoglires</taxon>
        <taxon>Glires</taxon>
        <taxon>Rodentia</taxon>
        <taxon>Myomorpha</taxon>
        <taxon>Muroidea</taxon>
        <taxon>Muridae</taxon>
        <taxon>Murinae</taxon>
        <taxon>Mus</taxon>
        <taxon>Mus</taxon>
    </lineage>
</organism>
<proteinExistence type="evidence at transcript level"/>
<protein>
    <recommendedName>
        <fullName>ADP-ribosylation factor 3</fullName>
    </recommendedName>
</protein>
<dbReference type="EMBL" id="D87900">
    <property type="protein sequence ID" value="BAA13492.1"/>
    <property type="molecule type" value="mRNA"/>
</dbReference>
<dbReference type="EMBL" id="BC014778">
    <property type="protein sequence ID" value="AAH14778.1"/>
    <property type="molecule type" value="mRNA"/>
</dbReference>
<dbReference type="EMBL" id="BC024935">
    <property type="protein sequence ID" value="AAH24935.1"/>
    <property type="molecule type" value="mRNA"/>
</dbReference>
<dbReference type="CCDS" id="CCDS27804.1"/>
<dbReference type="PIR" id="JC4947">
    <property type="entry name" value="JC4947"/>
</dbReference>
<dbReference type="RefSeq" id="NP_001342439.1">
    <property type="nucleotide sequence ID" value="NM_001355510.1"/>
</dbReference>
<dbReference type="RefSeq" id="NP_031504.1">
    <property type="nucleotide sequence ID" value="NM_007478.3"/>
</dbReference>
<dbReference type="RefSeq" id="XP_011243747.1">
    <property type="nucleotide sequence ID" value="XM_011245445.1"/>
</dbReference>
<dbReference type="SMR" id="P61205"/>
<dbReference type="BioGRID" id="198186">
    <property type="interactions" value="51"/>
</dbReference>
<dbReference type="FunCoup" id="P61205">
    <property type="interactions" value="3601"/>
</dbReference>
<dbReference type="IntAct" id="P61205">
    <property type="interactions" value="7"/>
</dbReference>
<dbReference type="MINT" id="P61205"/>
<dbReference type="STRING" id="10090.ENSMUSP00000050689"/>
<dbReference type="GlyGen" id="P61205">
    <property type="glycosylation" value="1 site, 1 O-linked glycan (1 site)"/>
</dbReference>
<dbReference type="iPTMnet" id="P61205"/>
<dbReference type="PhosphoSitePlus" id="P61205"/>
<dbReference type="SwissPalm" id="P61205"/>
<dbReference type="jPOST" id="P61205"/>
<dbReference type="PaxDb" id="10090-ENSMUSP00000050689"/>
<dbReference type="PeptideAtlas" id="P61205"/>
<dbReference type="ProteomicsDB" id="283199"/>
<dbReference type="Pumba" id="P61205"/>
<dbReference type="TopDownProteomics" id="P61205"/>
<dbReference type="Antibodypedia" id="25743">
    <property type="antibodies" value="125 antibodies from 28 providers"/>
</dbReference>
<dbReference type="DNASU" id="11842"/>
<dbReference type="Ensembl" id="ENSMUST00000053183.12">
    <property type="protein sequence ID" value="ENSMUSP00000050689.10"/>
    <property type="gene ID" value="ENSMUSG00000051853.11"/>
</dbReference>
<dbReference type="GeneID" id="11842"/>
<dbReference type="KEGG" id="mmu:11842"/>
<dbReference type="UCSC" id="uc007xnp.1">
    <property type="organism name" value="mouse"/>
</dbReference>
<dbReference type="AGR" id="MGI:99432"/>
<dbReference type="CTD" id="377"/>
<dbReference type="MGI" id="MGI:99432">
    <property type="gene designation" value="Arf3"/>
</dbReference>
<dbReference type="VEuPathDB" id="HostDB:ENSMUSG00000051853"/>
<dbReference type="eggNOG" id="KOG0070">
    <property type="taxonomic scope" value="Eukaryota"/>
</dbReference>
<dbReference type="GeneTree" id="ENSGT00950000183080"/>
<dbReference type="HOGENOM" id="CLU_040729_9_3_1"/>
<dbReference type="InParanoid" id="P61205"/>
<dbReference type="OMA" id="IRQRHWF"/>
<dbReference type="OrthoDB" id="2011769at2759"/>
<dbReference type="PhylomeDB" id="P61205"/>
<dbReference type="TreeFam" id="TF300808"/>
<dbReference type="Reactome" id="R-MMU-1660514">
    <property type="pathway name" value="Synthesis of PIPs at the Golgi membrane"/>
</dbReference>
<dbReference type="Reactome" id="R-MMU-6807878">
    <property type="pathway name" value="COPI-mediated anterograde transport"/>
</dbReference>
<dbReference type="Reactome" id="R-MMU-6811434">
    <property type="pathway name" value="COPI-dependent Golgi-to-ER retrograde traffic"/>
</dbReference>
<dbReference type="BioGRID-ORCS" id="11842">
    <property type="hits" value="4 hits in 80 CRISPR screens"/>
</dbReference>
<dbReference type="CD-CODE" id="CE726F99">
    <property type="entry name" value="Postsynaptic density"/>
</dbReference>
<dbReference type="ChiTaRS" id="Arf3">
    <property type="organism name" value="mouse"/>
</dbReference>
<dbReference type="PRO" id="PR:P61205"/>
<dbReference type="Proteomes" id="UP000000589">
    <property type="component" value="Chromosome 15"/>
</dbReference>
<dbReference type="RNAct" id="P61205">
    <property type="molecule type" value="protein"/>
</dbReference>
<dbReference type="Bgee" id="ENSMUSG00000051853">
    <property type="expression patterns" value="Expressed in nucleus accumbens and 263 other cell types or tissues"/>
</dbReference>
<dbReference type="ExpressionAtlas" id="P61205">
    <property type="expression patterns" value="baseline and differential"/>
</dbReference>
<dbReference type="GO" id="GO:0005794">
    <property type="term" value="C:Golgi apparatus"/>
    <property type="evidence" value="ECO:0000314"/>
    <property type="project" value="MGI"/>
</dbReference>
<dbReference type="GO" id="GO:0048471">
    <property type="term" value="C:perinuclear region of cytoplasm"/>
    <property type="evidence" value="ECO:0007669"/>
    <property type="project" value="UniProtKB-SubCell"/>
</dbReference>
<dbReference type="GO" id="GO:0005525">
    <property type="term" value="F:GTP binding"/>
    <property type="evidence" value="ECO:0000304"/>
    <property type="project" value="MGI"/>
</dbReference>
<dbReference type="GO" id="GO:0003924">
    <property type="term" value="F:GTPase activity"/>
    <property type="evidence" value="ECO:0007669"/>
    <property type="project" value="InterPro"/>
</dbReference>
<dbReference type="GO" id="GO:0015031">
    <property type="term" value="P:protein transport"/>
    <property type="evidence" value="ECO:0000304"/>
    <property type="project" value="MGI"/>
</dbReference>
<dbReference type="GO" id="GO:0006890">
    <property type="term" value="P:retrograde vesicle-mediated transport, Golgi to endoplasmic reticulum"/>
    <property type="evidence" value="ECO:0007669"/>
    <property type="project" value="Ensembl"/>
</dbReference>
<dbReference type="CDD" id="cd04150">
    <property type="entry name" value="Arf1_5_like"/>
    <property type="match status" value="1"/>
</dbReference>
<dbReference type="FunFam" id="3.40.50.300:FF:003500">
    <property type="entry name" value="ADP-ribosylation factor 1"/>
    <property type="match status" value="1"/>
</dbReference>
<dbReference type="Gene3D" id="3.40.50.300">
    <property type="entry name" value="P-loop containing nucleotide triphosphate hydrolases"/>
    <property type="match status" value="1"/>
</dbReference>
<dbReference type="InterPro" id="IPR045872">
    <property type="entry name" value="Arf1-5-like"/>
</dbReference>
<dbReference type="InterPro" id="IPR027417">
    <property type="entry name" value="P-loop_NTPase"/>
</dbReference>
<dbReference type="InterPro" id="IPR005225">
    <property type="entry name" value="Small_GTP-bd"/>
</dbReference>
<dbReference type="InterPro" id="IPR024156">
    <property type="entry name" value="Small_GTPase_ARF"/>
</dbReference>
<dbReference type="InterPro" id="IPR006689">
    <property type="entry name" value="Small_GTPase_ARF/SAR"/>
</dbReference>
<dbReference type="NCBIfam" id="TIGR00231">
    <property type="entry name" value="small_GTP"/>
    <property type="match status" value="1"/>
</dbReference>
<dbReference type="PANTHER" id="PTHR11711">
    <property type="entry name" value="ADP RIBOSYLATION FACTOR-RELATED"/>
    <property type="match status" value="1"/>
</dbReference>
<dbReference type="Pfam" id="PF00025">
    <property type="entry name" value="Arf"/>
    <property type="match status" value="1"/>
</dbReference>
<dbReference type="PRINTS" id="PR00328">
    <property type="entry name" value="SAR1GTPBP"/>
</dbReference>
<dbReference type="SMART" id="SM00177">
    <property type="entry name" value="ARF"/>
    <property type="match status" value="1"/>
</dbReference>
<dbReference type="SMART" id="SM00175">
    <property type="entry name" value="RAB"/>
    <property type="match status" value="1"/>
</dbReference>
<dbReference type="SMART" id="SM00178">
    <property type="entry name" value="SAR"/>
    <property type="match status" value="1"/>
</dbReference>
<dbReference type="SUPFAM" id="SSF52540">
    <property type="entry name" value="P-loop containing nucleoside triphosphate hydrolases"/>
    <property type="match status" value="1"/>
</dbReference>
<dbReference type="PROSITE" id="PS51417">
    <property type="entry name" value="ARF"/>
    <property type="match status" value="1"/>
</dbReference>
<feature type="initiator methionine" description="Removed" evidence="2">
    <location>
        <position position="1"/>
    </location>
</feature>
<feature type="chain" id="PRO_0000207387" description="ADP-ribosylation factor 3">
    <location>
        <begin position="2"/>
        <end position="181"/>
    </location>
</feature>
<feature type="binding site" evidence="1">
    <location>
        <begin position="24"/>
        <end position="31"/>
    </location>
    <ligand>
        <name>GTP</name>
        <dbReference type="ChEBI" id="CHEBI:37565"/>
    </ligand>
</feature>
<feature type="binding site" evidence="1">
    <location>
        <begin position="67"/>
        <end position="71"/>
    </location>
    <ligand>
        <name>GTP</name>
        <dbReference type="ChEBI" id="CHEBI:37565"/>
    </ligand>
</feature>
<feature type="binding site" evidence="1">
    <location>
        <begin position="126"/>
        <end position="129"/>
    </location>
    <ligand>
        <name>GTP</name>
        <dbReference type="ChEBI" id="CHEBI:37565"/>
    </ligand>
</feature>
<feature type="lipid moiety-binding region" description="N-myristoyl glycine" evidence="2">
    <location>
        <position position="2"/>
    </location>
</feature>
<accession>P61205</accession>
<accession>P16587</accession>
<name>ARF3_MOUSE</name>
<sequence length="181" mass="20601">MGNIFGNLLKSLIGKKEMRILMVGLDAAGKTTILYKLKLGEIVTTIPTIGFNVETVEYKNISFTVWDVGGQDKIRPLWRHYFQNTQGLIFVVDSNDRERVNEAREELMRMLAEDELRDAVLLVFANKQDLPNAMNAAEITDKLGLHSLRHRNWYIQATCATSGDGLYEGLDWLANQLKNKK</sequence>
<gene>
    <name type="primary">Arf3</name>
</gene>
<evidence type="ECO:0000250" key="1"/>
<evidence type="ECO:0000255" key="2"/>
<evidence type="ECO:0000305" key="3"/>